<organism>
    <name type="scientific">Mus musculus</name>
    <name type="common">Mouse</name>
    <dbReference type="NCBI Taxonomy" id="10090"/>
    <lineage>
        <taxon>Eukaryota</taxon>
        <taxon>Metazoa</taxon>
        <taxon>Chordata</taxon>
        <taxon>Craniata</taxon>
        <taxon>Vertebrata</taxon>
        <taxon>Euteleostomi</taxon>
        <taxon>Mammalia</taxon>
        <taxon>Eutheria</taxon>
        <taxon>Euarchontoglires</taxon>
        <taxon>Glires</taxon>
        <taxon>Rodentia</taxon>
        <taxon>Myomorpha</taxon>
        <taxon>Muroidea</taxon>
        <taxon>Muridae</taxon>
        <taxon>Murinae</taxon>
        <taxon>Mus</taxon>
        <taxon>Mus</taxon>
    </lineage>
</organism>
<gene>
    <name type="primary">C3ar1</name>
    <name type="synonym">C3r1</name>
</gene>
<sequence>MESFDADTNSTDLHSRPLFQPQDIASMVILGLTCLLGLLGNGLVLWVAGVKMKTTVNTVWFLHLTLADFLCCLSLPFSLAHLILQGHWPYGLFLCKLIPSIIILNMFASVFLLTAISLDRCLIVHKPIWCQNHRNVRTAFAICGCVWVVAFVMCVPVFVYRDLFIMDNRSICRYNFDSSRSYDYWDYVYKLSLPESNSTDNSTAQLTGHMNDRSAPSSVQARDYFWTVTTALQSQPFLTSPEDSFSLDSANQQPHYGGKPPNVLTAAVPSGFPVEDRKSNTLNADAFLSAHTELFPTASSGHLYPYDFQGDYVDQFTYDNHVPTPLMAITITRLVVGFLVPFFIMVICYSLIVFRMRKTNFTKSRNKTFRVAVAVVTVFFICWTPYHLVGVLLLITDPESSLGEAVMSWDHMSIALASANSCFNPFLYALLGKDFRKKARQSIKGILEAAFSEELTHSTNCTQDKASSKRNNMSTDV</sequence>
<name>C3AR_MOUSE</name>
<protein>
    <recommendedName>
        <fullName>C3a anaphylatoxin chemotactic receptor</fullName>
        <shortName>C3AR</shortName>
        <shortName>C3a-R</shortName>
    </recommendedName>
    <alternativeName>
        <fullName>Complement component 3a receptor 1</fullName>
    </alternativeName>
</protein>
<comment type="function">
    <text>Receptor for the chemotactic and inflammatory peptide anaphylatoxin C3a. This receptor stimulates chemotaxis, granule enzyme release and superoxide anion production.</text>
</comment>
<comment type="subunit">
    <text evidence="4">Interacts with VGF-derived peptide TLQP-21.</text>
</comment>
<comment type="subcellular location">
    <subcellularLocation>
        <location>Cell membrane</location>
        <topology>Multi-pass membrane protein</topology>
    </subcellularLocation>
</comment>
<comment type="tissue specificity">
    <text>Detected in varying levels in all tissues examined except the spleen. Especially abundant in heart and lung.</text>
</comment>
<comment type="similarity">
    <text evidence="3">Belongs to the G-protein coupled receptor 1 family.</text>
</comment>
<evidence type="ECO:0000250" key="1"/>
<evidence type="ECO:0000255" key="2"/>
<evidence type="ECO:0000255" key="3">
    <source>
        <dbReference type="PROSITE-ProRule" id="PRU00521"/>
    </source>
</evidence>
<evidence type="ECO:0000269" key="4">
    <source>
    </source>
</evidence>
<evidence type="ECO:0000305" key="5"/>
<evidence type="ECO:0007744" key="6">
    <source>
    </source>
</evidence>
<dbReference type="EMBL" id="U77461">
    <property type="protein sequence ID" value="AAC53204.1"/>
    <property type="molecule type" value="Genomic_DNA"/>
</dbReference>
<dbReference type="EMBL" id="U77460">
    <property type="protein sequence ID" value="AAC53203.1"/>
    <property type="molecule type" value="mRNA"/>
</dbReference>
<dbReference type="EMBL" id="U97537">
    <property type="protein sequence ID" value="AAB71814.1"/>
    <property type="molecule type" value="Genomic_DNA"/>
</dbReference>
<dbReference type="EMBL" id="AF053757">
    <property type="protein sequence ID" value="AAC40193.1"/>
    <property type="molecule type" value="Genomic_DNA"/>
</dbReference>
<dbReference type="EMBL" id="BC003728">
    <property type="protein sequence ID" value="AAH03728.1"/>
    <property type="molecule type" value="mRNA"/>
</dbReference>
<dbReference type="CCDS" id="CCDS20504.1"/>
<dbReference type="RefSeq" id="NP_033909.1">
    <property type="nucleotide sequence ID" value="NM_009779.2"/>
</dbReference>
<dbReference type="SMR" id="O09047"/>
<dbReference type="CORUM" id="O09047"/>
<dbReference type="FunCoup" id="O09047">
    <property type="interactions" value="1213"/>
</dbReference>
<dbReference type="STRING" id="10090.ENSMUSP00000048092"/>
<dbReference type="GlyCosmos" id="O09047">
    <property type="glycosylation" value="4 sites, No reported glycans"/>
</dbReference>
<dbReference type="GlyGen" id="O09047">
    <property type="glycosylation" value="4 sites"/>
</dbReference>
<dbReference type="iPTMnet" id="O09047"/>
<dbReference type="PhosphoSitePlus" id="O09047"/>
<dbReference type="jPOST" id="O09047"/>
<dbReference type="PaxDb" id="10090-ENSMUSP00000048092"/>
<dbReference type="ProteomicsDB" id="281715"/>
<dbReference type="Antibodypedia" id="3999">
    <property type="antibodies" value="571 antibodies from 35 providers"/>
</dbReference>
<dbReference type="DNASU" id="12267"/>
<dbReference type="Ensembl" id="ENSMUST00000042081.9">
    <property type="protein sequence ID" value="ENSMUSP00000048092.9"/>
    <property type="gene ID" value="ENSMUSG00000040552.9"/>
</dbReference>
<dbReference type="GeneID" id="12267"/>
<dbReference type="KEGG" id="mmu:12267"/>
<dbReference type="UCSC" id="uc009dps.1">
    <property type="organism name" value="mouse"/>
</dbReference>
<dbReference type="AGR" id="MGI:1097680"/>
<dbReference type="CTD" id="719"/>
<dbReference type="MGI" id="MGI:1097680">
    <property type="gene designation" value="C3ar1"/>
</dbReference>
<dbReference type="VEuPathDB" id="HostDB:ENSMUSG00000040552"/>
<dbReference type="eggNOG" id="ENOG502R35Z">
    <property type="taxonomic scope" value="Eukaryota"/>
</dbReference>
<dbReference type="GeneTree" id="ENSGT01130000278339"/>
<dbReference type="HOGENOM" id="CLU_009579_35_0_1"/>
<dbReference type="InParanoid" id="O09047"/>
<dbReference type="OMA" id="MCGYNFG"/>
<dbReference type="OrthoDB" id="10037617at2759"/>
<dbReference type="PhylomeDB" id="O09047"/>
<dbReference type="TreeFam" id="TF330976"/>
<dbReference type="Reactome" id="R-MMU-375276">
    <property type="pathway name" value="Peptide ligand-binding receptors"/>
</dbReference>
<dbReference type="Reactome" id="R-MMU-418594">
    <property type="pathway name" value="G alpha (i) signalling events"/>
</dbReference>
<dbReference type="Reactome" id="R-MMU-6798695">
    <property type="pathway name" value="Neutrophil degranulation"/>
</dbReference>
<dbReference type="Reactome" id="R-MMU-977606">
    <property type="pathway name" value="Regulation of Complement cascade"/>
</dbReference>
<dbReference type="BioGRID-ORCS" id="12267">
    <property type="hits" value="4 hits in 79 CRISPR screens"/>
</dbReference>
<dbReference type="PRO" id="PR:O09047"/>
<dbReference type="Proteomes" id="UP000000589">
    <property type="component" value="Chromosome 6"/>
</dbReference>
<dbReference type="RNAct" id="O09047">
    <property type="molecule type" value="protein"/>
</dbReference>
<dbReference type="Bgee" id="ENSMUSG00000040552">
    <property type="expression patterns" value="Expressed in stroma of bone marrow and 139 other cell types or tissues"/>
</dbReference>
<dbReference type="ExpressionAtlas" id="O09047">
    <property type="expression patterns" value="baseline and differential"/>
</dbReference>
<dbReference type="GO" id="GO:0005886">
    <property type="term" value="C:plasma membrane"/>
    <property type="evidence" value="ECO:0007669"/>
    <property type="project" value="UniProtKB-SubCell"/>
</dbReference>
<dbReference type="GO" id="GO:0004876">
    <property type="term" value="F:complement component C3a receptor activity"/>
    <property type="evidence" value="ECO:0007669"/>
    <property type="project" value="Ensembl"/>
</dbReference>
<dbReference type="GO" id="GO:0004930">
    <property type="term" value="F:G protein-coupled receptor activity"/>
    <property type="evidence" value="ECO:0007669"/>
    <property type="project" value="UniProtKB-KW"/>
</dbReference>
<dbReference type="GO" id="GO:0019722">
    <property type="term" value="P:calcium-mediated signaling"/>
    <property type="evidence" value="ECO:0007669"/>
    <property type="project" value="Ensembl"/>
</dbReference>
<dbReference type="GO" id="GO:0006935">
    <property type="term" value="P:chemotaxis"/>
    <property type="evidence" value="ECO:0007669"/>
    <property type="project" value="UniProtKB-KW"/>
</dbReference>
<dbReference type="GO" id="GO:0045766">
    <property type="term" value="P:positive regulation of angiogenesis"/>
    <property type="evidence" value="ECO:0000315"/>
    <property type="project" value="BHF-UCL"/>
</dbReference>
<dbReference type="GO" id="GO:0010759">
    <property type="term" value="P:positive regulation of macrophage chemotaxis"/>
    <property type="evidence" value="ECO:0000315"/>
    <property type="project" value="BHF-UCL"/>
</dbReference>
<dbReference type="GO" id="GO:0090023">
    <property type="term" value="P:positive regulation of neutrophil chemotaxis"/>
    <property type="evidence" value="ECO:0000315"/>
    <property type="project" value="BHF-UCL"/>
</dbReference>
<dbReference type="GO" id="GO:0010575">
    <property type="term" value="P:positive regulation of vascular endothelial growth factor production"/>
    <property type="evidence" value="ECO:0000315"/>
    <property type="project" value="BHF-UCL"/>
</dbReference>
<dbReference type="FunFam" id="1.20.1070.10:FF:000269">
    <property type="entry name" value="C3a anaphylatoxin chemotactic receptor"/>
    <property type="match status" value="1"/>
</dbReference>
<dbReference type="FunFam" id="1.20.1070.10:FF:000284">
    <property type="entry name" value="C3a anaphylatoxin chemotactic receptor"/>
    <property type="match status" value="1"/>
</dbReference>
<dbReference type="Gene3D" id="1.20.1070.10">
    <property type="entry name" value="Rhodopsin 7-helix transmembrane proteins"/>
    <property type="match status" value="2"/>
</dbReference>
<dbReference type="InterPro" id="IPR001644">
    <property type="entry name" value="Anaphtx_C3AR1"/>
</dbReference>
<dbReference type="InterPro" id="IPR002234">
    <property type="entry name" value="Anphylx_rcpt_C3a/C5a1-2"/>
</dbReference>
<dbReference type="InterPro" id="IPR000826">
    <property type="entry name" value="Formyl_rcpt-rel"/>
</dbReference>
<dbReference type="InterPro" id="IPR000276">
    <property type="entry name" value="GPCR_Rhodpsn"/>
</dbReference>
<dbReference type="InterPro" id="IPR017452">
    <property type="entry name" value="GPCR_Rhodpsn_7TM"/>
</dbReference>
<dbReference type="PANTHER" id="PTHR24225:SF28">
    <property type="entry name" value="C3A ANAPHYLATOXIN CHEMOTACTIC RECEPTOR"/>
    <property type="match status" value="1"/>
</dbReference>
<dbReference type="PANTHER" id="PTHR24225">
    <property type="entry name" value="CHEMOTACTIC RECEPTOR"/>
    <property type="match status" value="1"/>
</dbReference>
<dbReference type="Pfam" id="PF00001">
    <property type="entry name" value="7tm_1"/>
    <property type="match status" value="2"/>
</dbReference>
<dbReference type="PRINTS" id="PR01104">
    <property type="entry name" value="ANPHYLATOXNR"/>
</dbReference>
<dbReference type="PRINTS" id="PR01060">
    <property type="entry name" value="C3ANPHYLTXNR"/>
</dbReference>
<dbReference type="PRINTS" id="PR00237">
    <property type="entry name" value="GPCRRHODOPSN"/>
</dbReference>
<dbReference type="SUPFAM" id="SSF81321">
    <property type="entry name" value="Family A G protein-coupled receptor-like"/>
    <property type="match status" value="2"/>
</dbReference>
<dbReference type="PROSITE" id="PS00237">
    <property type="entry name" value="G_PROTEIN_RECEP_F1_1"/>
    <property type="match status" value="1"/>
</dbReference>
<dbReference type="PROSITE" id="PS50262">
    <property type="entry name" value="G_PROTEIN_RECEP_F1_2"/>
    <property type="match status" value="1"/>
</dbReference>
<reference key="1">
    <citation type="journal article" date="1997" name="J. Immunol.">
        <title>The mouse anaphylatoxin C3a receptor: molecular cloning, genomic organization, and functional expression.</title>
        <authorList>
            <person name="Tornetta M.A."/>
            <person name="Foley J.J."/>
            <person name="Sarau H.M."/>
            <person name="Ames R.S."/>
        </authorList>
    </citation>
    <scope>NUCLEOTIDE SEQUENCE [GENOMIC DNA / MRNA]</scope>
    <source>
        <strain>129/SvJ</strain>
        <strain>C57BL/6J</strain>
        <tissue>Brain</tissue>
    </source>
</reference>
<reference key="2">
    <citation type="journal article" date="1997" name="Immunogenetics">
        <title>Cloning and functional characterization of the mouse C3a anaphylatoxin receptor gene.</title>
        <authorList>
            <person name="Hsu M.H."/>
            <person name="Ember J.A."/>
            <person name="Wang M."/>
            <person name="Prossnitz E.R."/>
            <person name="Hugli T.E."/>
            <person name="Ye R.D."/>
        </authorList>
    </citation>
    <scope>NUCLEOTIDE SEQUENCE [GENOMIC DNA]</scope>
    <source>
        <strain>129/SvJ</strain>
    </source>
</reference>
<reference key="3">
    <citation type="journal article" date="1998" name="Mol. Immunol.">
        <title>Cloning, expression, sequence determination, and chromosome localization of the mouse complement C3a anaphylatoxin receptor gene.</title>
        <authorList>
            <person name="Hollmann T.J."/>
            <person name="Haviland D.L."/>
            <person name="Kildsgaard J."/>
            <person name="Watts K."/>
            <person name="Wetsel R.A."/>
        </authorList>
    </citation>
    <scope>NUCLEOTIDE SEQUENCE [GENOMIC DNA]</scope>
    <source>
        <strain>129/SvJ</strain>
    </source>
</reference>
<reference key="4">
    <citation type="journal article" date="2004" name="Genome Res.">
        <title>The status, quality, and expansion of the NIH full-length cDNA project: the Mammalian Gene Collection (MGC).</title>
        <authorList>
            <consortium name="The MGC Project Team"/>
        </authorList>
    </citation>
    <scope>NUCLEOTIDE SEQUENCE [LARGE SCALE MRNA]</scope>
    <source>
        <strain>FVB/N</strain>
        <tissue>Mammary gland</tissue>
    </source>
</reference>
<reference key="5">
    <citation type="journal article" date="2010" name="Cell">
        <title>A tissue-specific atlas of mouse protein phosphorylation and expression.</title>
        <authorList>
            <person name="Huttlin E.L."/>
            <person name="Jedrychowski M.P."/>
            <person name="Elias J.E."/>
            <person name="Goswami T."/>
            <person name="Rad R."/>
            <person name="Beausoleil S.A."/>
            <person name="Villen J."/>
            <person name="Haas W."/>
            <person name="Sowa M.E."/>
            <person name="Gygi S.P."/>
        </authorList>
    </citation>
    <scope>PHOSPHORYLATION [LARGE SCALE ANALYSIS] AT SER-452 AND THR-456</scope>
    <scope>IDENTIFICATION BY MASS SPECTROMETRY [LARGE SCALE ANALYSIS]</scope>
    <source>
        <tissue>Liver</tissue>
        <tissue>Testis</tissue>
    </source>
</reference>
<reference key="6">
    <citation type="journal article" date="2014" name="Structure">
        <title>The TLQP-21 peptide activates the G-protein-coupled receptor C3aR1 via a folding-upon-binding mechanism.</title>
        <authorList>
            <person name="Cero C."/>
            <person name="Vostrikov V.V."/>
            <person name="Verardi R."/>
            <person name="Severini C."/>
            <person name="Gopinath T."/>
            <person name="Braun P.D."/>
            <person name="Sassano M.F."/>
            <person name="Gurney A."/>
            <person name="Roth B.L."/>
            <person name="Vulchanova L."/>
            <person name="Possenti R."/>
            <person name="Veglia G."/>
            <person name="Bartolomucci A."/>
        </authorList>
    </citation>
    <scope>INTERACTION WITH VGF</scope>
</reference>
<keyword id="KW-1003">Cell membrane</keyword>
<keyword id="KW-0145">Chemotaxis</keyword>
<keyword id="KW-1015">Disulfide bond</keyword>
<keyword id="KW-0297">G-protein coupled receptor</keyword>
<keyword id="KW-0325">Glycoprotein</keyword>
<keyword id="KW-0472">Membrane</keyword>
<keyword id="KW-0597">Phosphoprotein</keyword>
<keyword id="KW-0675">Receptor</keyword>
<keyword id="KW-1185">Reference proteome</keyword>
<keyword id="KW-0765">Sulfation</keyword>
<keyword id="KW-0807">Transducer</keyword>
<keyword id="KW-0812">Transmembrane</keyword>
<keyword id="KW-1133">Transmembrane helix</keyword>
<proteinExistence type="evidence at protein level"/>
<accession>O09047</accession>
<accession>O35951</accession>
<feature type="chain" id="PRO_0000069204" description="C3a anaphylatoxin chemotactic receptor">
    <location>
        <begin position="1"/>
        <end position="477"/>
    </location>
</feature>
<feature type="topological domain" description="Extracellular" evidence="2">
    <location>
        <begin position="1"/>
        <end position="23"/>
    </location>
</feature>
<feature type="transmembrane region" description="Helical; Name=1" evidence="2">
    <location>
        <begin position="24"/>
        <end position="46"/>
    </location>
</feature>
<feature type="topological domain" description="Cytoplasmic" evidence="2">
    <location>
        <begin position="47"/>
        <end position="57"/>
    </location>
</feature>
<feature type="transmembrane region" description="Helical; Name=2" evidence="2">
    <location>
        <begin position="58"/>
        <end position="80"/>
    </location>
</feature>
<feature type="topological domain" description="Extracellular" evidence="2">
    <location>
        <begin position="81"/>
        <end position="96"/>
    </location>
</feature>
<feature type="transmembrane region" description="Helical; Name=3" evidence="2">
    <location>
        <begin position="97"/>
        <end position="118"/>
    </location>
</feature>
<feature type="topological domain" description="Cytoplasmic" evidence="2">
    <location>
        <begin position="119"/>
        <end position="139"/>
    </location>
</feature>
<feature type="transmembrane region" description="Helical; Name=4" evidence="2">
    <location>
        <begin position="140"/>
        <end position="160"/>
    </location>
</feature>
<feature type="topological domain" description="Extracellular" evidence="2">
    <location>
        <begin position="161"/>
        <end position="333"/>
    </location>
</feature>
<feature type="transmembrane region" description="Helical; Name=5" evidence="2">
    <location>
        <begin position="334"/>
        <end position="353"/>
    </location>
</feature>
<feature type="topological domain" description="Cytoplasmic" evidence="2">
    <location>
        <begin position="354"/>
        <end position="370"/>
    </location>
</feature>
<feature type="transmembrane region" description="Helical; Name=6" evidence="2">
    <location>
        <begin position="371"/>
        <end position="393"/>
    </location>
</feature>
<feature type="topological domain" description="Extracellular" evidence="2">
    <location>
        <begin position="394"/>
        <end position="410"/>
    </location>
</feature>
<feature type="transmembrane region" description="Helical; Name=7" evidence="2">
    <location>
        <begin position="411"/>
        <end position="431"/>
    </location>
</feature>
<feature type="topological domain" description="Cytoplasmic" evidence="2">
    <location>
        <begin position="432"/>
        <end position="477"/>
    </location>
</feature>
<feature type="modified residue" description="Sulfotyrosine" evidence="1">
    <location>
        <position position="174"/>
    </location>
</feature>
<feature type="modified residue" description="Sulfotyrosine" evidence="1">
    <location>
        <position position="184"/>
    </location>
</feature>
<feature type="modified residue" description="Sulfotyrosine" evidence="1">
    <location>
        <position position="312"/>
    </location>
</feature>
<feature type="modified residue" description="Phosphoserine" evidence="6">
    <location>
        <position position="452"/>
    </location>
</feature>
<feature type="modified residue" description="Phosphothreonine" evidence="6">
    <location>
        <position position="456"/>
    </location>
</feature>
<feature type="glycosylation site" description="N-linked (GlcNAc...) asparagine" evidence="2">
    <location>
        <position position="9"/>
    </location>
</feature>
<feature type="glycosylation site" description="N-linked (GlcNAc...) asparagine" evidence="2">
    <location>
        <position position="168"/>
    </location>
</feature>
<feature type="glycosylation site" description="N-linked (GlcNAc...) asparagine" evidence="2">
    <location>
        <position position="197"/>
    </location>
</feature>
<feature type="glycosylation site" description="N-linked (GlcNAc...) asparagine" evidence="2">
    <location>
        <position position="201"/>
    </location>
</feature>
<feature type="disulfide bond" evidence="3">
    <location>
        <begin position="95"/>
        <end position="172"/>
    </location>
</feature>
<feature type="sequence conflict" description="In Ref. 2; AAB71814." evidence="5" ref="2">
    <original>R</original>
    <variation>K</variation>
    <location>
        <position position="173"/>
    </location>
</feature>
<feature type="sequence conflict" description="In Ref. 2; AAB71814." evidence="5" ref="2">
    <original>E</original>
    <variation>K</variation>
    <location>
        <position position="195"/>
    </location>
</feature>
<feature type="sequence conflict" description="In Ref. 2; AAB71814." evidence="5" ref="2">
    <original>D</original>
    <variation>N</variation>
    <location>
        <position position="243"/>
    </location>
</feature>
<feature type="sequence conflict" description="In Ref. 2; AAB71814." evidence="5" ref="2">
    <original>D</original>
    <variation>N</variation>
    <location>
        <position position="276"/>
    </location>
</feature>
<feature type="sequence conflict" description="In Ref. 2; AAB71814." evidence="5" ref="2">
    <original>FIC</original>
    <variation>LS</variation>
    <location>
        <begin position="380"/>
        <end position="382"/>
    </location>
</feature>
<feature type="sequence conflict" description="In Ref. 2; AAB71814." evidence="5" ref="2">
    <original>V</original>
    <variation>I</variation>
    <location>
        <position position="391"/>
    </location>
</feature>
<feature type="sequence conflict" description="In Ref. 2; AAB71814." evidence="5" ref="2">
    <original>N</original>
    <variation>S</variation>
    <location>
        <position position="460"/>
    </location>
</feature>